<feature type="chain" id="PRO_0000440180" description="Glycine oxidase">
    <location>
        <begin position="1"/>
        <end position="377"/>
    </location>
</feature>
<feature type="binding site" evidence="3">
    <location>
        <begin position="14"/>
        <end position="15"/>
    </location>
    <ligand>
        <name>FAD</name>
        <dbReference type="ChEBI" id="CHEBI:57692"/>
    </ligand>
</feature>
<feature type="binding site" evidence="3">
    <location>
        <begin position="34"/>
        <end position="35"/>
    </location>
    <ligand>
        <name>FAD</name>
        <dbReference type="ChEBI" id="CHEBI:57692"/>
    </ligand>
</feature>
<feature type="binding site" evidence="3">
    <location>
        <begin position="42"/>
        <end position="43"/>
    </location>
    <ligand>
        <name>FAD</name>
        <dbReference type="ChEBI" id="CHEBI:57692"/>
    </ligand>
</feature>
<feature type="binding site" evidence="3">
    <location>
        <begin position="47"/>
        <end position="49"/>
    </location>
    <ligand>
        <name>FAD</name>
        <dbReference type="ChEBI" id="CHEBI:57692"/>
    </ligand>
</feature>
<feature type="binding site" evidence="3">
    <location>
        <position position="180"/>
    </location>
    <ligand>
        <name>FAD</name>
        <dbReference type="ChEBI" id="CHEBI:57692"/>
    </ligand>
</feature>
<feature type="binding site" evidence="3">
    <location>
        <position position="309"/>
    </location>
    <ligand>
        <name>substrate</name>
    </ligand>
</feature>
<feature type="binding site" evidence="3">
    <location>
        <begin position="334"/>
        <end position="340"/>
    </location>
    <ligand>
        <name>FAD</name>
        <dbReference type="ChEBI" id="CHEBI:57692"/>
    </ligand>
</feature>
<feature type="binding site" evidence="3">
    <location>
        <position position="336"/>
    </location>
    <ligand>
        <name>substrate</name>
    </ligand>
</feature>
<feature type="strand" evidence="8">
    <location>
        <begin position="4"/>
        <end position="10"/>
    </location>
</feature>
<feature type="helix" evidence="8">
    <location>
        <begin position="14"/>
        <end position="25"/>
    </location>
</feature>
<feature type="strand" evidence="8">
    <location>
        <begin position="30"/>
        <end position="33"/>
    </location>
</feature>
<feature type="strand" evidence="8">
    <location>
        <begin position="35"/>
        <end position="37"/>
    </location>
</feature>
<feature type="turn" evidence="8">
    <location>
        <begin position="38"/>
        <end position="41"/>
    </location>
</feature>
<feature type="helix" evidence="8">
    <location>
        <begin position="42"/>
        <end position="45"/>
    </location>
</feature>
<feature type="turn" evidence="8">
    <location>
        <begin position="52"/>
        <end position="54"/>
    </location>
</feature>
<feature type="helix" evidence="8">
    <location>
        <begin position="62"/>
        <end position="84"/>
    </location>
</feature>
<feature type="strand" evidence="8">
    <location>
        <begin position="95"/>
        <end position="99"/>
    </location>
</feature>
<feature type="helix" evidence="8">
    <location>
        <begin position="102"/>
        <end position="112"/>
    </location>
</feature>
<feature type="helix" evidence="8">
    <location>
        <begin position="114"/>
        <end position="117"/>
    </location>
</feature>
<feature type="strand" evidence="8">
    <location>
        <begin position="123"/>
        <end position="125"/>
    </location>
</feature>
<feature type="helix" evidence="8">
    <location>
        <begin position="129"/>
        <end position="132"/>
    </location>
</feature>
<feature type="strand" evidence="8">
    <location>
        <begin position="142"/>
        <end position="148"/>
    </location>
</feature>
<feature type="helix" evidence="8">
    <location>
        <begin position="156"/>
        <end position="169"/>
    </location>
</feature>
<feature type="strand" evidence="8">
    <location>
        <begin position="173"/>
        <end position="175"/>
    </location>
</feature>
<feature type="strand" evidence="8">
    <location>
        <begin position="180"/>
        <end position="184"/>
    </location>
</feature>
<feature type="strand" evidence="8">
    <location>
        <begin position="187"/>
        <end position="194"/>
    </location>
</feature>
<feature type="strand" evidence="8">
    <location>
        <begin position="197"/>
        <end position="206"/>
    </location>
</feature>
<feature type="helix" evidence="8">
    <location>
        <begin position="209"/>
        <end position="211"/>
    </location>
</feature>
<feature type="helix" evidence="8">
    <location>
        <begin position="212"/>
        <end position="217"/>
    </location>
</feature>
<feature type="turn" evidence="8">
    <location>
        <begin position="218"/>
        <end position="220"/>
    </location>
</feature>
<feature type="strand" evidence="8">
    <location>
        <begin position="225"/>
        <end position="236"/>
    </location>
</feature>
<feature type="strand" evidence="8">
    <location>
        <begin position="243"/>
        <end position="251"/>
    </location>
</feature>
<feature type="strand" evidence="8">
    <location>
        <begin position="253"/>
        <end position="257"/>
    </location>
</feature>
<feature type="turn" evidence="8">
    <location>
        <begin position="258"/>
        <end position="260"/>
    </location>
</feature>
<feature type="strand" evidence="8">
    <location>
        <begin position="261"/>
        <end position="265"/>
    </location>
</feature>
<feature type="helix" evidence="8">
    <location>
        <begin position="279"/>
        <end position="292"/>
    </location>
</feature>
<feature type="helix" evidence="8">
    <location>
        <begin position="294"/>
        <end position="298"/>
    </location>
</feature>
<feature type="strand" evidence="8">
    <location>
        <begin position="299"/>
        <end position="312"/>
    </location>
</feature>
<feature type="strand" evidence="8">
    <location>
        <begin position="318"/>
        <end position="321"/>
    </location>
</feature>
<feature type="strand" evidence="8">
    <location>
        <begin position="323"/>
        <end position="325"/>
    </location>
</feature>
<feature type="strand" evidence="8">
    <location>
        <begin position="328"/>
        <end position="332"/>
    </location>
</feature>
<feature type="helix" evidence="8">
    <location>
        <begin position="338"/>
        <end position="353"/>
    </location>
</feature>
<feature type="helix" evidence="8">
    <location>
        <begin position="363"/>
        <end position="365"/>
    </location>
</feature>
<sequence length="377" mass="39913">MTHRYDVAIVGGGVIGAAIGFELAKRRHRVAIFEKGTMGSGASSAAAGMLGAQSEFSTSSPLVPLALQSRALMPALAEELRERTGIDIGLVEKGLIKLATTEEEADDLYRHYTFWRGIGEPVQWLTKGEALEMEPRLAAEALAGAMYIPGDGQVSAPDLAAALAYAAASAGACLYEYTEVFDIRSDSSGHVLDTTGGTFAAEAVVIASGAWAARLGARVGLSLSVYPVKGECVMVRAPVPLLQTTVFAKNGCYIVPKSGNRLLIGATSTPGTFDRRVSAGGVMNLLHRAAHLVPDIEQAEWVASWSGIRPQTEDGLPYLGEHPERRGLFVAAGHYRNGILLSPLTGLLVADLVERKETAFDLAPFSLTRHIGKVGVE</sequence>
<protein>
    <recommendedName>
        <fullName evidence="4">Glycine oxidase</fullName>
        <shortName>GO</shortName>
        <shortName evidence="4">GOX</shortName>
        <ecNumber evidence="2">1.4.3.19</ecNumber>
    </recommendedName>
    <alternativeName>
        <fullName evidence="4">GOXK</fullName>
    </alternativeName>
</protein>
<comment type="function">
    <text evidence="1 2">Catalyzes the FAD-dependent oxidative deamination of various amines and D-amino acids to yield the corresponding alpha-keto acids, ammonia/amine, and hydrogen peroxide. Oxidizes glycine, sarcosine (N-methylglycine), N-ethylglycine, D-proline, D-alanine, glycine-ethyl ester, and some other D-amino acids. Does not act on L-proline (PubMed:17894345). Is essential for thiamine biosynthesis since the oxidation of glycine catalyzed by ThiO generates the glycine imine intermediate (dehydroglycine) required for the biosynthesis of the thiazole ring of thiamine pyrophosphate (By similarity).</text>
</comment>
<comment type="catalytic activity">
    <reaction evidence="2">
        <text>glycine + O2 + H2O = glyoxylate + H2O2 + NH4(+)</text>
        <dbReference type="Rhea" id="RHEA:11532"/>
        <dbReference type="ChEBI" id="CHEBI:15377"/>
        <dbReference type="ChEBI" id="CHEBI:15379"/>
        <dbReference type="ChEBI" id="CHEBI:16240"/>
        <dbReference type="ChEBI" id="CHEBI:28938"/>
        <dbReference type="ChEBI" id="CHEBI:36655"/>
        <dbReference type="ChEBI" id="CHEBI:57305"/>
        <dbReference type="EC" id="1.4.3.19"/>
    </reaction>
</comment>
<comment type="catalytic activity">
    <reaction evidence="2">
        <text>N-ethylglycine + O2 + H2O = ethylamine + glyoxylate + H2O2</text>
        <dbReference type="Rhea" id="RHEA:12472"/>
        <dbReference type="ChEBI" id="CHEBI:15377"/>
        <dbReference type="ChEBI" id="CHEBI:15379"/>
        <dbReference type="ChEBI" id="CHEBI:16240"/>
        <dbReference type="ChEBI" id="CHEBI:36655"/>
        <dbReference type="ChEBI" id="CHEBI:57440"/>
        <dbReference type="ChEBI" id="CHEBI:566789"/>
        <dbReference type="EC" id="1.4.3.19"/>
    </reaction>
</comment>
<comment type="catalytic activity">
    <reaction evidence="2">
        <text>sarcosine + O2 + H2O = methylamine + glyoxylate + H2O2</text>
        <dbReference type="Rhea" id="RHEA:15165"/>
        <dbReference type="ChEBI" id="CHEBI:15377"/>
        <dbReference type="ChEBI" id="CHEBI:15379"/>
        <dbReference type="ChEBI" id="CHEBI:16240"/>
        <dbReference type="ChEBI" id="CHEBI:36655"/>
        <dbReference type="ChEBI" id="CHEBI:57433"/>
        <dbReference type="ChEBI" id="CHEBI:59338"/>
        <dbReference type="EC" id="1.4.3.19"/>
    </reaction>
</comment>
<comment type="catalytic activity">
    <reaction evidence="2">
        <text>D-alanine + O2 + H2O = pyruvate + H2O2 + NH4(+)</text>
        <dbReference type="Rhea" id="RHEA:22688"/>
        <dbReference type="ChEBI" id="CHEBI:15361"/>
        <dbReference type="ChEBI" id="CHEBI:15377"/>
        <dbReference type="ChEBI" id="CHEBI:15379"/>
        <dbReference type="ChEBI" id="CHEBI:16240"/>
        <dbReference type="ChEBI" id="CHEBI:28938"/>
        <dbReference type="ChEBI" id="CHEBI:57416"/>
        <dbReference type="EC" id="1.4.3.19"/>
    </reaction>
</comment>
<comment type="cofactor">
    <cofactor evidence="2 3">
        <name>FAD</name>
        <dbReference type="ChEBI" id="CHEBI:57692"/>
    </cofactor>
    <text evidence="3">Binds 1 FAD per subunit.</text>
</comment>
<comment type="activity regulation">
    <text evidence="2">Is inhibited at high substrate concentration.</text>
</comment>
<comment type="biophysicochemical properties">
    <kinetics>
        <KM evidence="2">0.25 mM for glycine (at pH 8.5 and 37 degrees Celsius)</KM>
        <KM evidence="2">0.45 mM for sarcosine (at pH 8.5 and 37 degrees Celsius)</KM>
        <KM evidence="2">0.22 mM for N-ethylglycine (at pH 8.5 and 37 degrees Celsius)</KM>
        <KM evidence="2">9.3 mM for D-proline (at pH 8.5 and 37 degrees Celsius)</KM>
        <KM evidence="2">20.6 mM for D-alanine (at pH 8.5 and 37 degrees Celsius)</KM>
        <KM evidence="2">0.52 mM for glycine-ethyl ester (at pH 8.5 and 37 degrees Celsius)</KM>
        <text evidence="2">Vmax with D-proline as substrate is 1.4-, 2.75-, 3.5- and 4.3-fold higher than with glycine, sarcosine, D-alanine, and N-ethylglycine, respectively.</text>
    </kinetics>
    <phDependence>
        <text evidence="2">Optimum pH is 8.5. Is stable in the pH 6-9.5 range. A great decrease in stability is only produced at pH values below pH 4.0.</text>
    </phDependence>
    <temperatureDependence>
        <text evidence="2">Thermostable. Displays a Tm value of 2.5 hours at 60 degrees Celsius, and 0.6 hour at 80 degrees Celsius.</text>
    </temperatureDependence>
</comment>
<comment type="pathway">
    <text evidence="1 6">Cofactor biosynthesis; thiamine diphosphate biosynthesis.</text>
</comment>
<comment type="subunit">
    <text evidence="2">Homotetramer.</text>
</comment>
<comment type="similarity">
    <text evidence="5">Belongs to the DAO family. ThiO subfamily.</text>
</comment>
<organism>
    <name type="scientific">Geobacillus kaustophilus (strain HTA426)</name>
    <dbReference type="NCBI Taxonomy" id="235909"/>
    <lineage>
        <taxon>Bacteria</taxon>
        <taxon>Bacillati</taxon>
        <taxon>Bacillota</taxon>
        <taxon>Bacilli</taxon>
        <taxon>Bacillales</taxon>
        <taxon>Anoxybacillaceae</taxon>
        <taxon>Geobacillus</taxon>
        <taxon>Geobacillus thermoleovorans group</taxon>
    </lineage>
</organism>
<reference key="1">
    <citation type="journal article" date="2004" name="Nucleic Acids Res.">
        <title>Thermoadaptation trait revealed by the genome sequence of thermophilic Geobacillus kaustophilus.</title>
        <authorList>
            <person name="Takami H."/>
            <person name="Takaki Y."/>
            <person name="Chee G.-J."/>
            <person name="Nishi S."/>
            <person name="Shimamura S."/>
            <person name="Suzuki H."/>
            <person name="Matsui S."/>
            <person name="Uchiyama I."/>
        </authorList>
    </citation>
    <scope>NUCLEOTIDE SEQUENCE [LARGE SCALE GENOMIC DNA]</scope>
    <source>
        <strain>HTA426</strain>
    </source>
</reference>
<reference key="2">
    <citation type="journal article" date="2008" name="Proteins">
        <title>Characterization and structural modeling of a novel thermostable glycine oxidase from Geobacillus kaustophilus HTA426.</title>
        <authorList>
            <person name="Martinez-Martinez I."/>
            <person name="Navarro-Fernandez J."/>
            <person name="Garcia-Carmona F."/>
            <person name="Takami H."/>
            <person name="Sanchez-Ferrer A."/>
        </authorList>
    </citation>
    <scope>FUNCTION</scope>
    <scope>CATALYTIC ACTIVITY</scope>
    <scope>BIOPHYSICOCHEMICAL PROPERTIES</scope>
    <scope>SUBSTRATE SPECIFICITY</scope>
    <scope>COFACTOR</scope>
    <scope>ACTIVITY REGULATION</scope>
    <scope>SUBUNIT</scope>
    <scope>3D-STRUCTURE MODELING</scope>
    <scope>PATHWAY</scope>
    <source>
        <strain>HTA426</strain>
    </source>
</reference>
<reference key="3">
    <citation type="submission" date="2015-03" db="PDB data bank">
        <title>Crystal structure of glycine oxidase from Geobacillus kaustophilus.</title>
        <authorList>
            <person name="Shiono T."/>
            <person name="Arai R."/>
            <person name="Nishiya Y."/>
            <person name="Nomura T."/>
        </authorList>
    </citation>
    <scope>X-RAY CRYSTALLOGRAPHY (2.20 ANGSTROMS) IN COMPLEX WITH FAD AND GLYCINE</scope>
    <scope>COFACTOR</scope>
</reference>
<proteinExistence type="evidence at protein level"/>
<gene>
    <name evidence="1" type="primary">thiO</name>
    <name evidence="7" type="ordered locus">GK0623</name>
</gene>
<accession>Q5L2C2</accession>
<dbReference type="EC" id="1.4.3.19" evidence="2"/>
<dbReference type="EMBL" id="BA000043">
    <property type="protein sequence ID" value="BAD74908.1"/>
    <property type="molecule type" value="Genomic_DNA"/>
</dbReference>
<dbReference type="RefSeq" id="WP_011230127.1">
    <property type="nucleotide sequence ID" value="NC_006510.1"/>
</dbReference>
<dbReference type="PDB" id="4YSH">
    <property type="method" value="X-ray"/>
    <property type="resolution" value="2.20 A"/>
    <property type="chains" value="A/B=1-377"/>
</dbReference>
<dbReference type="PDBsum" id="4YSH"/>
<dbReference type="SMR" id="Q5L2C2"/>
<dbReference type="STRING" id="235909.GK0623"/>
<dbReference type="KEGG" id="gka:GK0623"/>
<dbReference type="eggNOG" id="COG0665">
    <property type="taxonomic scope" value="Bacteria"/>
</dbReference>
<dbReference type="HOGENOM" id="CLU_007884_4_5_9"/>
<dbReference type="BRENDA" id="1.4.3.19">
    <property type="organism ID" value="8138"/>
</dbReference>
<dbReference type="UniPathway" id="UPA00060"/>
<dbReference type="Proteomes" id="UP000001172">
    <property type="component" value="Chromosome"/>
</dbReference>
<dbReference type="GO" id="GO:0005737">
    <property type="term" value="C:cytoplasm"/>
    <property type="evidence" value="ECO:0007669"/>
    <property type="project" value="TreeGrafter"/>
</dbReference>
<dbReference type="GO" id="GO:0071949">
    <property type="term" value="F:FAD binding"/>
    <property type="evidence" value="ECO:0000314"/>
    <property type="project" value="UniProtKB"/>
</dbReference>
<dbReference type="GO" id="GO:0043799">
    <property type="term" value="F:glycine oxidase activity"/>
    <property type="evidence" value="ECO:0000314"/>
    <property type="project" value="UniProtKB"/>
</dbReference>
<dbReference type="GO" id="GO:0006520">
    <property type="term" value="P:amino acid metabolic process"/>
    <property type="evidence" value="ECO:0000314"/>
    <property type="project" value="UniProtKB"/>
</dbReference>
<dbReference type="GO" id="GO:0051289">
    <property type="term" value="P:protein homotetramerization"/>
    <property type="evidence" value="ECO:0000314"/>
    <property type="project" value="UniProtKB"/>
</dbReference>
<dbReference type="GO" id="GO:0009228">
    <property type="term" value="P:thiamine biosynthetic process"/>
    <property type="evidence" value="ECO:0007669"/>
    <property type="project" value="UniProtKB-KW"/>
</dbReference>
<dbReference type="GO" id="GO:0009229">
    <property type="term" value="P:thiamine diphosphate biosynthetic process"/>
    <property type="evidence" value="ECO:0007669"/>
    <property type="project" value="UniProtKB-UniPathway"/>
</dbReference>
<dbReference type="Gene3D" id="3.30.9.10">
    <property type="entry name" value="D-Amino Acid Oxidase, subunit A, domain 2"/>
    <property type="match status" value="1"/>
</dbReference>
<dbReference type="Gene3D" id="3.50.50.60">
    <property type="entry name" value="FAD/NAD(P)-binding domain"/>
    <property type="match status" value="1"/>
</dbReference>
<dbReference type="InterPro" id="IPR006076">
    <property type="entry name" value="FAD-dep_OxRdtase"/>
</dbReference>
<dbReference type="InterPro" id="IPR036188">
    <property type="entry name" value="FAD/NAD-bd_sf"/>
</dbReference>
<dbReference type="InterPro" id="IPR012727">
    <property type="entry name" value="Gly_oxidase_ThiO"/>
</dbReference>
<dbReference type="NCBIfam" id="TIGR02352">
    <property type="entry name" value="thiamin_ThiO"/>
    <property type="match status" value="1"/>
</dbReference>
<dbReference type="PANTHER" id="PTHR13847:SF289">
    <property type="entry name" value="GLYCINE OXIDASE"/>
    <property type="match status" value="1"/>
</dbReference>
<dbReference type="PANTHER" id="PTHR13847">
    <property type="entry name" value="SARCOSINE DEHYDROGENASE-RELATED"/>
    <property type="match status" value="1"/>
</dbReference>
<dbReference type="Pfam" id="PF01266">
    <property type="entry name" value="DAO"/>
    <property type="match status" value="1"/>
</dbReference>
<dbReference type="SUPFAM" id="SSF54373">
    <property type="entry name" value="FAD-linked reductases, C-terminal domain"/>
    <property type="match status" value="1"/>
</dbReference>
<dbReference type="SUPFAM" id="SSF51905">
    <property type="entry name" value="FAD/NAD(P)-binding domain"/>
    <property type="match status" value="1"/>
</dbReference>
<evidence type="ECO:0000250" key="1">
    <source>
        <dbReference type="UniProtKB" id="O31616"/>
    </source>
</evidence>
<evidence type="ECO:0000269" key="2">
    <source>
    </source>
</evidence>
<evidence type="ECO:0000269" key="3">
    <source ref="3"/>
</evidence>
<evidence type="ECO:0000303" key="4">
    <source>
    </source>
</evidence>
<evidence type="ECO:0000305" key="5"/>
<evidence type="ECO:0000305" key="6">
    <source>
    </source>
</evidence>
<evidence type="ECO:0000312" key="7">
    <source>
        <dbReference type="EMBL" id="BAD74908.1"/>
    </source>
</evidence>
<evidence type="ECO:0007829" key="8">
    <source>
        <dbReference type="PDB" id="4YSH"/>
    </source>
</evidence>
<name>GLYOX_GEOKA</name>
<keyword id="KW-0002">3D-structure</keyword>
<keyword id="KW-0274">FAD</keyword>
<keyword id="KW-0285">Flavoprotein</keyword>
<keyword id="KW-0560">Oxidoreductase</keyword>
<keyword id="KW-1185">Reference proteome</keyword>
<keyword id="KW-0784">Thiamine biosynthesis</keyword>